<name>TRMD_HAHCH</name>
<protein>
    <recommendedName>
        <fullName evidence="1">tRNA (guanine-N(1)-)-methyltransferase</fullName>
        <ecNumber evidence="1">2.1.1.228</ecNumber>
    </recommendedName>
    <alternativeName>
        <fullName evidence="1">M1G-methyltransferase</fullName>
    </alternativeName>
    <alternativeName>
        <fullName evidence="1">tRNA [GM37] methyltransferase</fullName>
    </alternativeName>
</protein>
<dbReference type="EC" id="2.1.1.228" evidence="1"/>
<dbReference type="EMBL" id="CP000155">
    <property type="protein sequence ID" value="ABC28618.1"/>
    <property type="molecule type" value="Genomic_DNA"/>
</dbReference>
<dbReference type="SMR" id="Q2SL56"/>
<dbReference type="STRING" id="349521.HCH_01774"/>
<dbReference type="KEGG" id="hch:HCH_01774"/>
<dbReference type="eggNOG" id="COG0336">
    <property type="taxonomic scope" value="Bacteria"/>
</dbReference>
<dbReference type="HOGENOM" id="CLU_047363_0_1_6"/>
<dbReference type="Proteomes" id="UP000000238">
    <property type="component" value="Chromosome"/>
</dbReference>
<dbReference type="GO" id="GO:0005829">
    <property type="term" value="C:cytosol"/>
    <property type="evidence" value="ECO:0007669"/>
    <property type="project" value="TreeGrafter"/>
</dbReference>
<dbReference type="GO" id="GO:0052906">
    <property type="term" value="F:tRNA (guanine(37)-N1)-methyltransferase activity"/>
    <property type="evidence" value="ECO:0007669"/>
    <property type="project" value="UniProtKB-UniRule"/>
</dbReference>
<dbReference type="GO" id="GO:0002939">
    <property type="term" value="P:tRNA N1-guanine methylation"/>
    <property type="evidence" value="ECO:0007669"/>
    <property type="project" value="TreeGrafter"/>
</dbReference>
<dbReference type="CDD" id="cd18080">
    <property type="entry name" value="TrmD-like"/>
    <property type="match status" value="1"/>
</dbReference>
<dbReference type="FunFam" id="1.10.1270.20:FF:000001">
    <property type="entry name" value="tRNA (guanine-N(1)-)-methyltransferase"/>
    <property type="match status" value="1"/>
</dbReference>
<dbReference type="FunFam" id="3.40.1280.10:FF:000001">
    <property type="entry name" value="tRNA (guanine-N(1)-)-methyltransferase"/>
    <property type="match status" value="1"/>
</dbReference>
<dbReference type="Gene3D" id="3.40.1280.10">
    <property type="match status" value="1"/>
</dbReference>
<dbReference type="Gene3D" id="1.10.1270.20">
    <property type="entry name" value="tRNA(m1g37)methyltransferase, domain 2"/>
    <property type="match status" value="1"/>
</dbReference>
<dbReference type="HAMAP" id="MF_00605">
    <property type="entry name" value="TrmD"/>
    <property type="match status" value="1"/>
</dbReference>
<dbReference type="InterPro" id="IPR029028">
    <property type="entry name" value="Alpha/beta_knot_MTases"/>
</dbReference>
<dbReference type="InterPro" id="IPR023148">
    <property type="entry name" value="tRNA_m1G_MeTrfase_C_sf"/>
</dbReference>
<dbReference type="InterPro" id="IPR002649">
    <property type="entry name" value="tRNA_m1G_MeTrfase_TrmD"/>
</dbReference>
<dbReference type="InterPro" id="IPR029026">
    <property type="entry name" value="tRNA_m1G_MTases_N"/>
</dbReference>
<dbReference type="InterPro" id="IPR016009">
    <property type="entry name" value="tRNA_MeTrfase_TRMD/TRM10"/>
</dbReference>
<dbReference type="NCBIfam" id="NF000648">
    <property type="entry name" value="PRK00026.1"/>
    <property type="match status" value="1"/>
</dbReference>
<dbReference type="NCBIfam" id="TIGR00088">
    <property type="entry name" value="trmD"/>
    <property type="match status" value="1"/>
</dbReference>
<dbReference type="PANTHER" id="PTHR46417">
    <property type="entry name" value="TRNA (GUANINE-N(1)-)-METHYLTRANSFERASE"/>
    <property type="match status" value="1"/>
</dbReference>
<dbReference type="PANTHER" id="PTHR46417:SF1">
    <property type="entry name" value="TRNA (GUANINE-N(1)-)-METHYLTRANSFERASE"/>
    <property type="match status" value="1"/>
</dbReference>
<dbReference type="Pfam" id="PF01746">
    <property type="entry name" value="tRNA_m1G_MT"/>
    <property type="match status" value="1"/>
</dbReference>
<dbReference type="PIRSF" id="PIRSF000386">
    <property type="entry name" value="tRNA_mtase"/>
    <property type="match status" value="1"/>
</dbReference>
<dbReference type="SUPFAM" id="SSF75217">
    <property type="entry name" value="alpha/beta knot"/>
    <property type="match status" value="1"/>
</dbReference>
<gene>
    <name evidence="1" type="primary">trmD</name>
    <name type="ordered locus">HCH_01774</name>
</gene>
<comment type="function">
    <text evidence="1">Specifically methylates guanosine-37 in various tRNAs.</text>
</comment>
<comment type="catalytic activity">
    <reaction evidence="1">
        <text>guanosine(37) in tRNA + S-adenosyl-L-methionine = N(1)-methylguanosine(37) in tRNA + S-adenosyl-L-homocysteine + H(+)</text>
        <dbReference type="Rhea" id="RHEA:36899"/>
        <dbReference type="Rhea" id="RHEA-COMP:10145"/>
        <dbReference type="Rhea" id="RHEA-COMP:10147"/>
        <dbReference type="ChEBI" id="CHEBI:15378"/>
        <dbReference type="ChEBI" id="CHEBI:57856"/>
        <dbReference type="ChEBI" id="CHEBI:59789"/>
        <dbReference type="ChEBI" id="CHEBI:73542"/>
        <dbReference type="ChEBI" id="CHEBI:74269"/>
        <dbReference type="EC" id="2.1.1.228"/>
    </reaction>
</comment>
<comment type="subunit">
    <text evidence="1">Homodimer.</text>
</comment>
<comment type="subcellular location">
    <subcellularLocation>
        <location evidence="1">Cytoplasm</location>
    </subcellularLocation>
</comment>
<comment type="similarity">
    <text evidence="1">Belongs to the RNA methyltransferase TrmD family.</text>
</comment>
<accession>Q2SL56</accession>
<keyword id="KW-0963">Cytoplasm</keyword>
<keyword id="KW-0489">Methyltransferase</keyword>
<keyword id="KW-1185">Reference proteome</keyword>
<keyword id="KW-0949">S-adenosyl-L-methionine</keyword>
<keyword id="KW-0808">Transferase</keyword>
<keyword id="KW-0819">tRNA processing</keyword>
<feature type="chain" id="PRO_0000257424" description="tRNA (guanine-N(1)-)-methyltransferase">
    <location>
        <begin position="1"/>
        <end position="258"/>
    </location>
</feature>
<feature type="binding site" evidence="1">
    <location>
        <position position="122"/>
    </location>
    <ligand>
        <name>S-adenosyl-L-methionine</name>
        <dbReference type="ChEBI" id="CHEBI:59789"/>
    </ligand>
</feature>
<feature type="binding site" evidence="1">
    <location>
        <begin position="142"/>
        <end position="147"/>
    </location>
    <ligand>
        <name>S-adenosyl-L-methionine</name>
        <dbReference type="ChEBI" id="CHEBI:59789"/>
    </ligand>
</feature>
<organism>
    <name type="scientific">Hahella chejuensis (strain KCTC 2396)</name>
    <dbReference type="NCBI Taxonomy" id="349521"/>
    <lineage>
        <taxon>Bacteria</taxon>
        <taxon>Pseudomonadati</taxon>
        <taxon>Pseudomonadota</taxon>
        <taxon>Gammaproteobacteria</taxon>
        <taxon>Oceanospirillales</taxon>
        <taxon>Hahellaceae</taxon>
        <taxon>Hahella</taxon>
    </lineage>
</organism>
<evidence type="ECO:0000255" key="1">
    <source>
        <dbReference type="HAMAP-Rule" id="MF_00605"/>
    </source>
</evidence>
<proteinExistence type="inferred from homology"/>
<sequence>MLIGIRISEVWFGVITLFPEMLKSVTDFGVVGKAIKQSSIEVCTWNPRDYATDNYRTVDDRPYGGGPGMLMKVGPLEAALNAAKSVAPAGSKVVYLSPQGRRLDQALARSALSVPGLILLCGRYEGIDERLIEDEVDEEWSLGDFVLSGGEIAAMAIIDSVSRLAPGVLGHNESAEQDSFENSLLDCPHYTRPEIYRDKRVPEVLLSGNHEKIRRWRLEQSLLRTLQRRPDLLEQRELSEEEAQIIQELRRGQLISET</sequence>
<reference key="1">
    <citation type="journal article" date="2005" name="Nucleic Acids Res.">
        <title>Genomic blueprint of Hahella chejuensis, a marine microbe producing an algicidal agent.</title>
        <authorList>
            <person name="Jeong H."/>
            <person name="Yim J.H."/>
            <person name="Lee C."/>
            <person name="Choi S.-H."/>
            <person name="Park Y.K."/>
            <person name="Yoon S.H."/>
            <person name="Hur C.-G."/>
            <person name="Kang H.-Y."/>
            <person name="Kim D."/>
            <person name="Lee H.H."/>
            <person name="Park K.H."/>
            <person name="Park S.-H."/>
            <person name="Park H.-S."/>
            <person name="Lee H.K."/>
            <person name="Oh T.K."/>
            <person name="Kim J.F."/>
        </authorList>
    </citation>
    <scope>NUCLEOTIDE SEQUENCE [LARGE SCALE GENOMIC DNA]</scope>
    <source>
        <strain>KCTC 2396</strain>
    </source>
</reference>